<sequence length="416" mass="46843">MELGLALRLVAPPPLLPCLSRRALSLPPDFVSSRVLRGRRIHASRLKHGAGVVCNAIMTYSGVEEEEMVEEEMEEEAEPAVSTRPRLELIEKPDRSLALLDEYESEELGTSLCANHRSGYVAVLGKPNVGKSTLINQMVGQKLSIVTDKPQTTRHRILGICSEPEYQIILYDTPGVIKKEMHKLDSMMMKNVRSAIGSADCVLVVADACKTPEKIDEMLEEGVGNKDIGLPVLLVLNKKDLIKPGEIAKKLEWYQKFTNVDDVIPISAKFGHGVDDIKEWILSKLPLGPAYYPKDIASEHPERFFVGEIVREKIFVQYRQEIPYSCQVNVVSYKSRPAAKDFIQVEILVEKESQRGIILGKDGKSIKMLATASRLDIEDFLQKKVYLEVEVKVKENWRQDERLLKRYGYGGEIQAL</sequence>
<evidence type="ECO:0000250" key="1">
    <source>
        <dbReference type="UniProtKB" id="P06616"/>
    </source>
</evidence>
<evidence type="ECO:0000255" key="2"/>
<evidence type="ECO:0000255" key="3">
    <source>
        <dbReference type="PROSITE-ProRule" id="PRU00118"/>
    </source>
</evidence>
<evidence type="ECO:0000255" key="4">
    <source>
        <dbReference type="PROSITE-ProRule" id="PRU01050"/>
    </source>
</evidence>
<evidence type="ECO:0000269" key="5">
    <source>
    </source>
</evidence>
<evidence type="ECO:0000269" key="6">
    <source>
    </source>
</evidence>
<evidence type="ECO:0000303" key="7">
    <source>
    </source>
</evidence>
<evidence type="ECO:0000305" key="8"/>
<evidence type="ECO:0000312" key="9">
    <source>
        <dbReference type="EMBL" id="AQK92220.1"/>
    </source>
</evidence>
<comment type="function">
    <text evidence="6">Nuclear genome-encoded probable GTPase involved in ribosome biogenesis in chloroplasts. Plays a role in 16S rRNA maturation in plastids and may contribute to the assembly of the small (30S) ribosomal subunit.</text>
</comment>
<comment type="subcellular location">
    <subcellularLocation>
        <location evidence="5">Plastid</location>
        <location evidence="5">Chloroplast stroma</location>
        <location evidence="5">Chloroplast nucleoid</location>
    </subcellularLocation>
</comment>
<comment type="disruption phenotype">
    <text evidence="6">Very pale yellow green leaf phenotype. Virescent leaf phenotype.</text>
</comment>
<comment type="similarity">
    <text evidence="4 8">Belongs to the TRAFAC class TrmE-Era-EngA-EngB-Septin-like GTPase superfamily. Era GTPase family.</text>
</comment>
<comment type="sequence caution" evidence="8">
    <conflict type="frameshift">
        <sequence resource="EMBL-CDS" id="ACF81962"/>
    </conflict>
</comment>
<comment type="sequence caution" evidence="8">
    <conflict type="frameshift">
        <sequence resource="EMBL-CDS" id="ACG35633"/>
    </conflict>
</comment>
<gene>
    <name evidence="7" type="primary">ERA1</name>
    <name evidence="9" type="ORF">ZEAMMB73_Zm00001d009596</name>
</gene>
<accession>K7UTH7</accession>
<accession>B4FIL9</accession>
<protein>
    <recommendedName>
        <fullName evidence="8">GTPase ERA1, chloroplastic</fullName>
        <shortName evidence="7">Zm-ERA1</shortName>
    </recommendedName>
    <alternativeName>
        <fullName evidence="8">GTP-binding protein ERA1</fullName>
    </alternativeName>
</protein>
<name>ERA1_MAIZE</name>
<feature type="transit peptide" description="Chloroplast" evidence="2">
    <location>
        <begin position="1"/>
        <end position="53"/>
    </location>
</feature>
<feature type="chain" id="PRO_0000441334" description="GTPase ERA1, chloroplastic">
    <location>
        <begin position="54"/>
        <end position="416"/>
    </location>
</feature>
<feature type="domain" description="Era-type G" evidence="4">
    <location>
        <begin position="117"/>
        <end position="287"/>
    </location>
</feature>
<feature type="domain" description="KH type-2" evidence="3">
    <location>
        <begin position="318"/>
        <end position="395"/>
    </location>
</feature>
<feature type="region of interest" description="G1" evidence="4">
    <location>
        <begin position="125"/>
        <end position="132"/>
    </location>
</feature>
<feature type="region of interest" description="G2" evidence="4">
    <location>
        <begin position="151"/>
        <end position="155"/>
    </location>
</feature>
<feature type="region of interest" description="G3" evidence="4">
    <location>
        <begin position="172"/>
        <end position="175"/>
    </location>
</feature>
<feature type="region of interest" description="G4" evidence="4">
    <location>
        <begin position="237"/>
        <end position="240"/>
    </location>
</feature>
<feature type="region of interest" description="G5" evidence="4">
    <location>
        <begin position="266"/>
        <end position="268"/>
    </location>
</feature>
<feature type="binding site" evidence="1">
    <location>
        <begin position="125"/>
        <end position="132"/>
    </location>
    <ligand>
        <name>GTP</name>
        <dbReference type="ChEBI" id="CHEBI:37565"/>
    </ligand>
</feature>
<feature type="binding site" evidence="1">
    <location>
        <begin position="172"/>
        <end position="176"/>
    </location>
    <ligand>
        <name>GTP</name>
        <dbReference type="ChEBI" id="CHEBI:37565"/>
    </ligand>
</feature>
<feature type="binding site" evidence="1">
    <location>
        <begin position="237"/>
        <end position="240"/>
    </location>
    <ligand>
        <name>GTP</name>
        <dbReference type="ChEBI" id="CHEBI:37565"/>
    </ligand>
</feature>
<reference key="1">
    <citation type="journal article" date="2009" name="Science">
        <title>The B73 maize genome: complexity, diversity, and dynamics.</title>
        <authorList>
            <person name="Schnable P.S."/>
            <person name="Ware D."/>
            <person name="Fulton R.S."/>
            <person name="Stein J.C."/>
            <person name="Wei F."/>
            <person name="Pasternak S."/>
            <person name="Liang C."/>
            <person name="Zhang J."/>
            <person name="Fulton L."/>
            <person name="Graves T.A."/>
            <person name="Minx P."/>
            <person name="Reily A.D."/>
            <person name="Courtney L."/>
            <person name="Kruchowski S.S."/>
            <person name="Tomlinson C."/>
            <person name="Strong C."/>
            <person name="Delehaunty K."/>
            <person name="Fronick C."/>
            <person name="Courtney B."/>
            <person name="Rock S.M."/>
            <person name="Belter E."/>
            <person name="Du F."/>
            <person name="Kim K."/>
            <person name="Abbott R.M."/>
            <person name="Cotton M."/>
            <person name="Levy A."/>
            <person name="Marchetto P."/>
            <person name="Ochoa K."/>
            <person name="Jackson S.M."/>
            <person name="Gillam B."/>
            <person name="Chen W."/>
            <person name="Yan L."/>
            <person name="Higginbotham J."/>
            <person name="Cardenas M."/>
            <person name="Waligorski J."/>
            <person name="Applebaum E."/>
            <person name="Phelps L."/>
            <person name="Falcone J."/>
            <person name="Kanchi K."/>
            <person name="Thane T."/>
            <person name="Scimone A."/>
            <person name="Thane N."/>
            <person name="Henke J."/>
            <person name="Wang T."/>
            <person name="Ruppert J."/>
            <person name="Shah N."/>
            <person name="Rotter K."/>
            <person name="Hodges J."/>
            <person name="Ingenthron E."/>
            <person name="Cordes M."/>
            <person name="Kohlberg S."/>
            <person name="Sgro J."/>
            <person name="Delgado B."/>
            <person name="Mead K."/>
            <person name="Chinwalla A."/>
            <person name="Leonard S."/>
            <person name="Crouse K."/>
            <person name="Collura K."/>
            <person name="Kudrna D."/>
            <person name="Currie J."/>
            <person name="He R."/>
            <person name="Angelova A."/>
            <person name="Rajasekar S."/>
            <person name="Mueller T."/>
            <person name="Lomeli R."/>
            <person name="Scara G."/>
            <person name="Ko A."/>
            <person name="Delaney K."/>
            <person name="Wissotski M."/>
            <person name="Lopez G."/>
            <person name="Campos D."/>
            <person name="Braidotti M."/>
            <person name="Ashley E."/>
            <person name="Golser W."/>
            <person name="Kim H."/>
            <person name="Lee S."/>
            <person name="Lin J."/>
            <person name="Dujmic Z."/>
            <person name="Kim W."/>
            <person name="Talag J."/>
            <person name="Zuccolo A."/>
            <person name="Fan C."/>
            <person name="Sebastian A."/>
            <person name="Kramer M."/>
            <person name="Spiegel L."/>
            <person name="Nascimento L."/>
            <person name="Zutavern T."/>
            <person name="Miller B."/>
            <person name="Ambroise C."/>
            <person name="Muller S."/>
            <person name="Spooner W."/>
            <person name="Narechania A."/>
            <person name="Ren L."/>
            <person name="Wei S."/>
            <person name="Kumari S."/>
            <person name="Faga B."/>
            <person name="Levy M.J."/>
            <person name="McMahan L."/>
            <person name="Van Buren P."/>
            <person name="Vaughn M.W."/>
            <person name="Ying K."/>
            <person name="Yeh C.-T."/>
            <person name="Emrich S.J."/>
            <person name="Jia Y."/>
            <person name="Kalyanaraman A."/>
            <person name="Hsia A.-P."/>
            <person name="Barbazuk W.B."/>
            <person name="Baucom R.S."/>
            <person name="Brutnell T.P."/>
            <person name="Carpita N.C."/>
            <person name="Chaparro C."/>
            <person name="Chia J.-M."/>
            <person name="Deragon J.-M."/>
            <person name="Estill J.C."/>
            <person name="Fu Y."/>
            <person name="Jeddeloh J.A."/>
            <person name="Han Y."/>
            <person name="Lee H."/>
            <person name="Li P."/>
            <person name="Lisch D.R."/>
            <person name="Liu S."/>
            <person name="Liu Z."/>
            <person name="Nagel D.H."/>
            <person name="McCann M.C."/>
            <person name="SanMiguel P."/>
            <person name="Myers A.M."/>
            <person name="Nettleton D."/>
            <person name="Nguyen J."/>
            <person name="Penning B.W."/>
            <person name="Ponnala L."/>
            <person name="Schneider K.L."/>
            <person name="Schwartz D.C."/>
            <person name="Sharma A."/>
            <person name="Soderlund C."/>
            <person name="Springer N.M."/>
            <person name="Sun Q."/>
            <person name="Wang H."/>
            <person name="Waterman M."/>
            <person name="Westerman R."/>
            <person name="Wolfgruber T.K."/>
            <person name="Yang L."/>
            <person name="Yu Y."/>
            <person name="Zhang L."/>
            <person name="Zhou S."/>
            <person name="Zhu Q."/>
            <person name="Bennetzen J.L."/>
            <person name="Dawe R.K."/>
            <person name="Jiang J."/>
            <person name="Jiang N."/>
            <person name="Presting G.G."/>
            <person name="Wessler S.R."/>
            <person name="Aluru S."/>
            <person name="Martienssen R.A."/>
            <person name="Clifton S.W."/>
            <person name="McCombie W.R."/>
            <person name="Wing R.A."/>
            <person name="Wilson R.K."/>
        </authorList>
    </citation>
    <scope>NUCLEOTIDE SEQUENCE [LARGE SCALE GENOMIC DNA]</scope>
    <source>
        <strain>cv. B73</strain>
    </source>
</reference>
<reference key="2">
    <citation type="journal article" date="2009" name="Plant Mol. Biol.">
        <title>Insights into corn genes derived from large-scale cDNA sequencing.</title>
        <authorList>
            <person name="Alexandrov N.N."/>
            <person name="Brover V.V."/>
            <person name="Freidin S."/>
            <person name="Troukhan M.E."/>
            <person name="Tatarinova T.V."/>
            <person name="Zhang H."/>
            <person name="Swaller T.J."/>
            <person name="Lu Y.-P."/>
            <person name="Bouck J."/>
            <person name="Flavell R.B."/>
            <person name="Feldmann K.A."/>
        </authorList>
    </citation>
    <scope>NUCLEOTIDE SEQUENCE [LARGE SCALE MRNA]</scope>
</reference>
<reference key="3">
    <citation type="journal article" date="2009" name="PLoS Genet.">
        <title>Sequencing, mapping, and analysis of 27,455 maize full-length cDNAs.</title>
        <authorList>
            <person name="Soderlund C."/>
            <person name="Descour A."/>
            <person name="Kudrna D."/>
            <person name="Bomhoff M."/>
            <person name="Boyd L."/>
            <person name="Currie J."/>
            <person name="Angelova A."/>
            <person name="Collura K."/>
            <person name="Wissotski M."/>
            <person name="Ashley E."/>
            <person name="Morrow D."/>
            <person name="Fernandes J."/>
            <person name="Walbot V."/>
            <person name="Yu Y."/>
        </authorList>
    </citation>
    <scope>NUCLEOTIDE SEQUENCE [LARGE SCALE MRNA]</scope>
    <source>
        <strain>cv. B73</strain>
    </source>
</reference>
<reference key="4">
    <citation type="journal article" date="2012" name="Plant Physiol.">
        <title>Nucleoid-enriched proteomes in developing plastids and chloroplasts from maize leaves: a new conceptual framework for nucleoid functions.</title>
        <authorList>
            <person name="Majeran W."/>
            <person name="Friso G."/>
            <person name="Asakura Y."/>
            <person name="Qu X."/>
            <person name="Huang M."/>
            <person name="Ponnala L."/>
            <person name="Watkins K.P."/>
            <person name="Barkan A."/>
            <person name="van Wijk K.J."/>
        </authorList>
    </citation>
    <scope>SUBCELLULAR LOCATION</scope>
</reference>
<reference key="5">
    <citation type="journal article" date="2015" name="Biochim. Biophys. Acta">
        <title>Large-scale genetic analysis of chloroplast biogenesis in maize.</title>
        <authorList>
            <person name="Belcher S."/>
            <person name="Williams-Carrier R."/>
            <person name="Stiffler N."/>
            <person name="Barkan A."/>
        </authorList>
    </citation>
    <scope>FUNCTION</scope>
    <scope>DISRUPTION PHENOTYPE</scope>
</reference>
<dbReference type="EMBL" id="CM000784">
    <property type="protein sequence ID" value="AQK92220.1"/>
    <property type="molecule type" value="Genomic_DNA"/>
</dbReference>
<dbReference type="EMBL" id="EU963515">
    <property type="protein sequence ID" value="ACG35633.1"/>
    <property type="status" value="ALT_FRAME"/>
    <property type="molecule type" value="mRNA"/>
</dbReference>
<dbReference type="EMBL" id="BT036957">
    <property type="protein sequence ID" value="ACF81962.1"/>
    <property type="status" value="ALT_FRAME"/>
    <property type="molecule type" value="mRNA"/>
</dbReference>
<dbReference type="RefSeq" id="NP_001136454.1">
    <property type="nucleotide sequence ID" value="NM_001142982.1"/>
</dbReference>
<dbReference type="RefSeq" id="NP_001350214.1">
    <property type="nucleotide sequence ID" value="NM_001363285.1"/>
</dbReference>
<dbReference type="RefSeq" id="XP_008654454.1">
    <property type="nucleotide sequence ID" value="XM_008656232.1"/>
</dbReference>
<dbReference type="SMR" id="K7UTH7"/>
<dbReference type="FunCoup" id="K7UTH7">
    <property type="interactions" value="408"/>
</dbReference>
<dbReference type="STRING" id="4577.K7UTH7"/>
<dbReference type="PaxDb" id="4577-GRMZM2G158024_P02"/>
<dbReference type="EnsemblPlants" id="Zm00001eb343970_T002">
    <property type="protein sequence ID" value="Zm00001eb343970_P002"/>
    <property type="gene ID" value="Zm00001eb343970"/>
</dbReference>
<dbReference type="GeneID" id="100216562"/>
<dbReference type="Gramene" id="Zm00001eb343970_T002">
    <property type="protein sequence ID" value="Zm00001eb343970_P002"/>
    <property type="gene ID" value="Zm00001eb343970"/>
</dbReference>
<dbReference type="eggNOG" id="KOG1423">
    <property type="taxonomic scope" value="Eukaryota"/>
</dbReference>
<dbReference type="HOGENOM" id="CLU_038009_1_3_1"/>
<dbReference type="InParanoid" id="K7UTH7"/>
<dbReference type="OMA" id="WAEVDVI"/>
<dbReference type="OrthoDB" id="8954335at2759"/>
<dbReference type="Proteomes" id="UP000007305">
    <property type="component" value="Chromosome 8"/>
</dbReference>
<dbReference type="ExpressionAtlas" id="K7UTH7">
    <property type="expression patterns" value="baseline and differential"/>
</dbReference>
<dbReference type="GO" id="GO:0042644">
    <property type="term" value="C:chloroplast nucleoid"/>
    <property type="evidence" value="ECO:0000314"/>
    <property type="project" value="UniProtKB"/>
</dbReference>
<dbReference type="GO" id="GO:0005525">
    <property type="term" value="F:GTP binding"/>
    <property type="evidence" value="ECO:0007669"/>
    <property type="project" value="UniProtKB-KW"/>
</dbReference>
<dbReference type="GO" id="GO:0003729">
    <property type="term" value="F:mRNA binding"/>
    <property type="evidence" value="ECO:0007669"/>
    <property type="project" value="EnsemblPlants"/>
</dbReference>
<dbReference type="GO" id="GO:0043024">
    <property type="term" value="F:ribosomal small subunit binding"/>
    <property type="evidence" value="ECO:0000318"/>
    <property type="project" value="GO_Central"/>
</dbReference>
<dbReference type="GO" id="GO:0019843">
    <property type="term" value="F:rRNA binding"/>
    <property type="evidence" value="ECO:0000318"/>
    <property type="project" value="GO_Central"/>
</dbReference>
<dbReference type="GO" id="GO:0000028">
    <property type="term" value="P:ribosomal small subunit assembly"/>
    <property type="evidence" value="ECO:0000318"/>
    <property type="project" value="GO_Central"/>
</dbReference>
<dbReference type="GO" id="GO:0042254">
    <property type="term" value="P:ribosome biogenesis"/>
    <property type="evidence" value="ECO:0000315"/>
    <property type="project" value="UniProtKB"/>
</dbReference>
<dbReference type="GO" id="GO:0006364">
    <property type="term" value="P:rRNA processing"/>
    <property type="evidence" value="ECO:0000315"/>
    <property type="project" value="UniProtKB"/>
</dbReference>
<dbReference type="CDD" id="cd04163">
    <property type="entry name" value="Era"/>
    <property type="match status" value="1"/>
</dbReference>
<dbReference type="CDD" id="cd22534">
    <property type="entry name" value="KH-II_Era"/>
    <property type="match status" value="1"/>
</dbReference>
<dbReference type="FunFam" id="3.30.300.20:FF:000003">
    <property type="entry name" value="GTPase Era"/>
    <property type="match status" value="1"/>
</dbReference>
<dbReference type="FunFam" id="3.40.50.300:FF:000094">
    <property type="entry name" value="GTPase Era"/>
    <property type="match status" value="1"/>
</dbReference>
<dbReference type="Gene3D" id="3.30.300.20">
    <property type="match status" value="1"/>
</dbReference>
<dbReference type="Gene3D" id="3.40.50.300">
    <property type="entry name" value="P-loop containing nucleotide triphosphate hydrolases"/>
    <property type="match status" value="1"/>
</dbReference>
<dbReference type="HAMAP" id="MF_00367">
    <property type="entry name" value="GTPase_Era"/>
    <property type="match status" value="1"/>
</dbReference>
<dbReference type="InterPro" id="IPR030388">
    <property type="entry name" value="G_ERA_dom"/>
</dbReference>
<dbReference type="InterPro" id="IPR006073">
    <property type="entry name" value="GTP-bd"/>
</dbReference>
<dbReference type="InterPro" id="IPR005662">
    <property type="entry name" value="GTPase_Era-like"/>
</dbReference>
<dbReference type="InterPro" id="IPR015946">
    <property type="entry name" value="KH_dom-like_a/b"/>
</dbReference>
<dbReference type="InterPro" id="IPR004044">
    <property type="entry name" value="KH_dom_type_2"/>
</dbReference>
<dbReference type="InterPro" id="IPR009019">
    <property type="entry name" value="KH_sf_prok-type"/>
</dbReference>
<dbReference type="InterPro" id="IPR027417">
    <property type="entry name" value="P-loop_NTPase"/>
</dbReference>
<dbReference type="InterPro" id="IPR005225">
    <property type="entry name" value="Small_GTP-bd"/>
</dbReference>
<dbReference type="NCBIfam" id="TIGR00436">
    <property type="entry name" value="era"/>
    <property type="match status" value="1"/>
</dbReference>
<dbReference type="NCBIfam" id="NF000908">
    <property type="entry name" value="PRK00089.1"/>
    <property type="match status" value="1"/>
</dbReference>
<dbReference type="NCBIfam" id="TIGR00231">
    <property type="entry name" value="small_GTP"/>
    <property type="match status" value="1"/>
</dbReference>
<dbReference type="PANTHER" id="PTHR42698">
    <property type="entry name" value="GTPASE ERA"/>
    <property type="match status" value="1"/>
</dbReference>
<dbReference type="PANTHER" id="PTHR42698:SF2">
    <property type="entry name" value="GTPASE ERA-LIKE, CHLOROPLASTIC"/>
    <property type="match status" value="1"/>
</dbReference>
<dbReference type="Pfam" id="PF07650">
    <property type="entry name" value="KH_2"/>
    <property type="match status" value="1"/>
</dbReference>
<dbReference type="Pfam" id="PF01926">
    <property type="entry name" value="MMR_HSR1"/>
    <property type="match status" value="1"/>
</dbReference>
<dbReference type="PRINTS" id="PR00326">
    <property type="entry name" value="GTP1OBG"/>
</dbReference>
<dbReference type="SUPFAM" id="SSF52540">
    <property type="entry name" value="P-loop containing nucleoside triphosphate hydrolases"/>
    <property type="match status" value="1"/>
</dbReference>
<dbReference type="SUPFAM" id="SSF54814">
    <property type="entry name" value="Prokaryotic type KH domain (KH-domain type II)"/>
    <property type="match status" value="1"/>
</dbReference>
<dbReference type="PROSITE" id="PS51713">
    <property type="entry name" value="G_ERA"/>
    <property type="match status" value="1"/>
</dbReference>
<dbReference type="PROSITE" id="PS50823">
    <property type="entry name" value="KH_TYPE_2"/>
    <property type="match status" value="1"/>
</dbReference>
<proteinExistence type="evidence at transcript level"/>
<organism>
    <name type="scientific">Zea mays</name>
    <name type="common">Maize</name>
    <dbReference type="NCBI Taxonomy" id="4577"/>
    <lineage>
        <taxon>Eukaryota</taxon>
        <taxon>Viridiplantae</taxon>
        <taxon>Streptophyta</taxon>
        <taxon>Embryophyta</taxon>
        <taxon>Tracheophyta</taxon>
        <taxon>Spermatophyta</taxon>
        <taxon>Magnoliopsida</taxon>
        <taxon>Liliopsida</taxon>
        <taxon>Poales</taxon>
        <taxon>Poaceae</taxon>
        <taxon>PACMAD clade</taxon>
        <taxon>Panicoideae</taxon>
        <taxon>Andropogonodae</taxon>
        <taxon>Andropogoneae</taxon>
        <taxon>Tripsacinae</taxon>
        <taxon>Zea</taxon>
    </lineage>
</organism>
<keyword id="KW-0150">Chloroplast</keyword>
<keyword id="KW-0342">GTP-binding</keyword>
<keyword id="KW-0547">Nucleotide-binding</keyword>
<keyword id="KW-0934">Plastid</keyword>
<keyword id="KW-1185">Reference proteome</keyword>
<keyword id="KW-0690">Ribosome biogenesis</keyword>
<keyword id="KW-0694">RNA-binding</keyword>
<keyword id="KW-0809">Transit peptide</keyword>